<comment type="function">
    <text evidence="1">Located at the top of the head of the 30S subunit, it contacts several helices of the 16S rRNA. In the 70S ribosome it contacts the 23S rRNA (bridge B1a) and protein L5 of the 50S subunit (bridge B1b), connecting the 2 subunits; these bridges are implicated in subunit movement. Contacts the tRNAs in the A and P-sites.</text>
</comment>
<comment type="subunit">
    <text evidence="1">Part of the 30S ribosomal subunit. Forms a loose heterodimer with protein S19. Forms two bridges to the 50S subunit in the 70S ribosome.</text>
</comment>
<comment type="similarity">
    <text evidence="1">Belongs to the universal ribosomal protein uS13 family.</text>
</comment>
<sequence length="121" mass="13434">MARIAGVDIPNDKRVVISLTYVYGIGLSTSKKILAAAGISEDIRVKDLTPDQEDAIRREVDAIKVEGDLRREVNLNIKRLMEIGSYRGIRHRRGLPVRGQNTKNNARTRKGKAVAIAGKKK</sequence>
<protein>
    <recommendedName>
        <fullName evidence="1">Small ribosomal subunit protein uS13</fullName>
    </recommendedName>
    <alternativeName>
        <fullName evidence="3">30S ribosomal protein S13</fullName>
    </alternativeName>
</protein>
<gene>
    <name evidence="1" type="primary">rpsM</name>
    <name type="ordered locus">SAK_0114</name>
</gene>
<keyword id="KW-0687">Ribonucleoprotein</keyword>
<keyword id="KW-0689">Ribosomal protein</keyword>
<keyword id="KW-0694">RNA-binding</keyword>
<keyword id="KW-0699">rRNA-binding</keyword>
<keyword id="KW-0820">tRNA-binding</keyword>
<organism>
    <name type="scientific">Streptococcus agalactiae serotype Ia (strain ATCC 27591 / A909 / CDC SS700)</name>
    <dbReference type="NCBI Taxonomy" id="205921"/>
    <lineage>
        <taxon>Bacteria</taxon>
        <taxon>Bacillati</taxon>
        <taxon>Bacillota</taxon>
        <taxon>Bacilli</taxon>
        <taxon>Lactobacillales</taxon>
        <taxon>Streptococcaceae</taxon>
        <taxon>Streptococcus</taxon>
    </lineage>
</organism>
<proteinExistence type="inferred from homology"/>
<name>RS13_STRA1</name>
<accession>Q3K3U6</accession>
<reference key="1">
    <citation type="journal article" date="2005" name="Proc. Natl. Acad. Sci. U.S.A.">
        <title>Genome analysis of multiple pathogenic isolates of Streptococcus agalactiae: implications for the microbial 'pan-genome'.</title>
        <authorList>
            <person name="Tettelin H."/>
            <person name="Masignani V."/>
            <person name="Cieslewicz M.J."/>
            <person name="Donati C."/>
            <person name="Medini D."/>
            <person name="Ward N.L."/>
            <person name="Angiuoli S.V."/>
            <person name="Crabtree J."/>
            <person name="Jones A.L."/>
            <person name="Durkin A.S."/>
            <person name="DeBoy R.T."/>
            <person name="Davidsen T.M."/>
            <person name="Mora M."/>
            <person name="Scarselli M."/>
            <person name="Margarit y Ros I."/>
            <person name="Peterson J.D."/>
            <person name="Hauser C.R."/>
            <person name="Sundaram J.P."/>
            <person name="Nelson W.C."/>
            <person name="Madupu R."/>
            <person name="Brinkac L.M."/>
            <person name="Dodson R.J."/>
            <person name="Rosovitz M.J."/>
            <person name="Sullivan S.A."/>
            <person name="Daugherty S.C."/>
            <person name="Haft D.H."/>
            <person name="Selengut J."/>
            <person name="Gwinn M.L."/>
            <person name="Zhou L."/>
            <person name="Zafar N."/>
            <person name="Khouri H."/>
            <person name="Radune D."/>
            <person name="Dimitrov G."/>
            <person name="Watkins K."/>
            <person name="O'Connor K.J."/>
            <person name="Smith S."/>
            <person name="Utterback T.R."/>
            <person name="White O."/>
            <person name="Rubens C.E."/>
            <person name="Grandi G."/>
            <person name="Madoff L.C."/>
            <person name="Kasper D.L."/>
            <person name="Telford J.L."/>
            <person name="Wessels M.R."/>
            <person name="Rappuoli R."/>
            <person name="Fraser C.M."/>
        </authorList>
    </citation>
    <scope>NUCLEOTIDE SEQUENCE [LARGE SCALE GENOMIC DNA]</scope>
    <source>
        <strain>ATCC 27591 / A909 / CDC SS700</strain>
    </source>
</reference>
<feature type="chain" id="PRO_0000230568" description="Small ribosomal subunit protein uS13">
    <location>
        <begin position="1"/>
        <end position="121"/>
    </location>
</feature>
<feature type="region of interest" description="Disordered" evidence="2">
    <location>
        <begin position="96"/>
        <end position="121"/>
    </location>
</feature>
<feature type="compositionally biased region" description="Basic residues" evidence="2">
    <location>
        <begin position="106"/>
        <end position="121"/>
    </location>
</feature>
<evidence type="ECO:0000255" key="1">
    <source>
        <dbReference type="HAMAP-Rule" id="MF_01315"/>
    </source>
</evidence>
<evidence type="ECO:0000256" key="2">
    <source>
        <dbReference type="SAM" id="MobiDB-lite"/>
    </source>
</evidence>
<evidence type="ECO:0000305" key="3"/>
<dbReference type="EMBL" id="CP000114">
    <property type="protein sequence ID" value="ABA45756.1"/>
    <property type="molecule type" value="Genomic_DNA"/>
</dbReference>
<dbReference type="RefSeq" id="WP_000090785.1">
    <property type="nucleotide sequence ID" value="NC_007432.1"/>
</dbReference>
<dbReference type="SMR" id="Q3K3U6"/>
<dbReference type="GeneID" id="66885042"/>
<dbReference type="KEGG" id="sak:SAK_0114"/>
<dbReference type="HOGENOM" id="CLU_103849_1_1_9"/>
<dbReference type="GO" id="GO:0005829">
    <property type="term" value="C:cytosol"/>
    <property type="evidence" value="ECO:0007669"/>
    <property type="project" value="TreeGrafter"/>
</dbReference>
<dbReference type="GO" id="GO:0015935">
    <property type="term" value="C:small ribosomal subunit"/>
    <property type="evidence" value="ECO:0007669"/>
    <property type="project" value="TreeGrafter"/>
</dbReference>
<dbReference type="GO" id="GO:0019843">
    <property type="term" value="F:rRNA binding"/>
    <property type="evidence" value="ECO:0007669"/>
    <property type="project" value="UniProtKB-UniRule"/>
</dbReference>
<dbReference type="GO" id="GO:0003735">
    <property type="term" value="F:structural constituent of ribosome"/>
    <property type="evidence" value="ECO:0007669"/>
    <property type="project" value="InterPro"/>
</dbReference>
<dbReference type="GO" id="GO:0000049">
    <property type="term" value="F:tRNA binding"/>
    <property type="evidence" value="ECO:0007669"/>
    <property type="project" value="UniProtKB-UniRule"/>
</dbReference>
<dbReference type="GO" id="GO:0006412">
    <property type="term" value="P:translation"/>
    <property type="evidence" value="ECO:0007669"/>
    <property type="project" value="UniProtKB-UniRule"/>
</dbReference>
<dbReference type="FunFam" id="1.10.8.50:FF:000001">
    <property type="entry name" value="30S ribosomal protein S13"/>
    <property type="match status" value="1"/>
</dbReference>
<dbReference type="FunFam" id="4.10.910.10:FF:000001">
    <property type="entry name" value="30S ribosomal protein S13"/>
    <property type="match status" value="1"/>
</dbReference>
<dbReference type="Gene3D" id="1.10.8.50">
    <property type="match status" value="1"/>
</dbReference>
<dbReference type="Gene3D" id="4.10.910.10">
    <property type="entry name" value="30s ribosomal protein s13, domain 2"/>
    <property type="match status" value="1"/>
</dbReference>
<dbReference type="HAMAP" id="MF_01315">
    <property type="entry name" value="Ribosomal_uS13"/>
    <property type="match status" value="1"/>
</dbReference>
<dbReference type="InterPro" id="IPR027437">
    <property type="entry name" value="Rbsml_uS13_C"/>
</dbReference>
<dbReference type="InterPro" id="IPR001892">
    <property type="entry name" value="Ribosomal_uS13"/>
</dbReference>
<dbReference type="InterPro" id="IPR010979">
    <property type="entry name" value="Ribosomal_uS13-like_H2TH"/>
</dbReference>
<dbReference type="InterPro" id="IPR019980">
    <property type="entry name" value="Ribosomal_uS13_bac-type"/>
</dbReference>
<dbReference type="InterPro" id="IPR018269">
    <property type="entry name" value="Ribosomal_uS13_CS"/>
</dbReference>
<dbReference type="NCBIfam" id="TIGR03631">
    <property type="entry name" value="uS13_bact"/>
    <property type="match status" value="1"/>
</dbReference>
<dbReference type="PANTHER" id="PTHR10871">
    <property type="entry name" value="30S RIBOSOMAL PROTEIN S13/40S RIBOSOMAL PROTEIN S18"/>
    <property type="match status" value="1"/>
</dbReference>
<dbReference type="PANTHER" id="PTHR10871:SF1">
    <property type="entry name" value="SMALL RIBOSOMAL SUBUNIT PROTEIN US13M"/>
    <property type="match status" value="1"/>
</dbReference>
<dbReference type="Pfam" id="PF00416">
    <property type="entry name" value="Ribosomal_S13"/>
    <property type="match status" value="1"/>
</dbReference>
<dbReference type="PIRSF" id="PIRSF002134">
    <property type="entry name" value="Ribosomal_S13"/>
    <property type="match status" value="1"/>
</dbReference>
<dbReference type="SUPFAM" id="SSF46946">
    <property type="entry name" value="S13-like H2TH domain"/>
    <property type="match status" value="1"/>
</dbReference>
<dbReference type="PROSITE" id="PS00646">
    <property type="entry name" value="RIBOSOMAL_S13_1"/>
    <property type="match status" value="1"/>
</dbReference>
<dbReference type="PROSITE" id="PS50159">
    <property type="entry name" value="RIBOSOMAL_S13_2"/>
    <property type="match status" value="1"/>
</dbReference>